<reference key="1">
    <citation type="journal article" date="2003" name="Mol. Microbiol.">
        <title>Genome-based analysis of virulence genes in a non-biofilm-forming Staphylococcus epidermidis strain (ATCC 12228).</title>
        <authorList>
            <person name="Zhang Y.-Q."/>
            <person name="Ren S.-X."/>
            <person name="Li H.-L."/>
            <person name="Wang Y.-X."/>
            <person name="Fu G."/>
            <person name="Yang J."/>
            <person name="Qin Z.-Q."/>
            <person name="Miao Y.-G."/>
            <person name="Wang W.-Y."/>
            <person name="Chen R.-S."/>
            <person name="Shen Y."/>
            <person name="Chen Z."/>
            <person name="Yuan Z.-H."/>
            <person name="Zhao G.-P."/>
            <person name="Qu D."/>
            <person name="Danchin A."/>
            <person name="Wen Y.-M."/>
        </authorList>
    </citation>
    <scope>NUCLEOTIDE SEQUENCE [LARGE SCALE GENOMIC DNA]</scope>
    <source>
        <strain>ATCC 12228 / FDA PCI 1200</strain>
    </source>
</reference>
<feature type="chain" id="PRO_0000192128" description="Bifunctional purine biosynthesis protein PurH">
    <location>
        <begin position="1"/>
        <end position="492"/>
    </location>
</feature>
<feature type="domain" description="MGS-like" evidence="2">
    <location>
        <begin position="1"/>
        <end position="144"/>
    </location>
</feature>
<name>PUR9_STAES</name>
<sequence length="492" mass="54587">MKKAILSVSNKSGIVEFAKALTNLDYELYSTGGTKRVLEDANINIKSVSELTQFPEIMDGRVKTLHPAVHGGILADRDKEHHLEQLREQHIDLIDMVVVNLYPFQQTVAQPDVTETDAVENIDIGGPTMLRAAAKNFKHVTTIVHPSDYNEVIERIKNHQLDEAYRKSLMVKVFQHTNEYDHAIVNYFKDNKETLRYGENPQQSAYFVRTSDSKHTIAGAKQLHGKQLSFNNIKDADAALSLVKKFNEPTAVAVKHMNPCGVGIGQSIDEAFQHAYEADNQSIFGGIIALNRTVDVKLAEALHSIFLEVVIAPQFTEEALKILTQKKNIRLLQIDMTIDNAEQEFVSVSGGYLVQDKDNKDVTRNDMTVATDTQPTEAQWEAMLLGWKVVSAVKSNAVILSNNKQTVGIGAGQMNRVGSAKIAIERAIEINDNVALVSDGFFPMGDTVEYAAEHGIKAIIQPGGSIKDQDSIDMANKYGITMVMTGMRHFKH</sequence>
<gene>
    <name evidence="1" type="primary">purH</name>
    <name type="ordered locus">SE_0771</name>
</gene>
<protein>
    <recommendedName>
        <fullName evidence="1">Bifunctional purine biosynthesis protein PurH</fullName>
    </recommendedName>
    <domain>
        <recommendedName>
            <fullName evidence="1">Phosphoribosylaminoimidazolecarboxamide formyltransferase</fullName>
            <ecNumber evidence="1">2.1.2.3</ecNumber>
        </recommendedName>
        <alternativeName>
            <fullName evidence="1">AICAR transformylase</fullName>
        </alternativeName>
    </domain>
    <domain>
        <recommendedName>
            <fullName evidence="1">IMP cyclohydrolase</fullName>
            <ecNumber evidence="1">3.5.4.10</ecNumber>
        </recommendedName>
        <alternativeName>
            <fullName evidence="1">ATIC</fullName>
        </alternativeName>
        <alternativeName>
            <fullName evidence="1">IMP synthase</fullName>
        </alternativeName>
        <alternativeName>
            <fullName evidence="1">Inosinicase</fullName>
        </alternativeName>
    </domain>
</protein>
<organism>
    <name type="scientific">Staphylococcus epidermidis (strain ATCC 12228 / FDA PCI 1200)</name>
    <dbReference type="NCBI Taxonomy" id="176280"/>
    <lineage>
        <taxon>Bacteria</taxon>
        <taxon>Bacillati</taxon>
        <taxon>Bacillota</taxon>
        <taxon>Bacilli</taxon>
        <taxon>Bacillales</taxon>
        <taxon>Staphylococcaceae</taxon>
        <taxon>Staphylococcus</taxon>
    </lineage>
</organism>
<proteinExistence type="inferred from homology"/>
<evidence type="ECO:0000255" key="1">
    <source>
        <dbReference type="HAMAP-Rule" id="MF_00139"/>
    </source>
</evidence>
<evidence type="ECO:0000255" key="2">
    <source>
        <dbReference type="PROSITE-ProRule" id="PRU01202"/>
    </source>
</evidence>
<dbReference type="EC" id="2.1.2.3" evidence="1"/>
<dbReference type="EC" id="3.5.4.10" evidence="1"/>
<dbReference type="EMBL" id="AE015929">
    <property type="protein sequence ID" value="AAO04368.1"/>
    <property type="molecule type" value="Genomic_DNA"/>
</dbReference>
<dbReference type="RefSeq" id="NP_764326.1">
    <property type="nucleotide sequence ID" value="NC_004461.1"/>
</dbReference>
<dbReference type="RefSeq" id="WP_002485342.1">
    <property type="nucleotide sequence ID" value="NZ_WBME01000028.1"/>
</dbReference>
<dbReference type="SMR" id="Q8CT27"/>
<dbReference type="GeneID" id="50019089"/>
<dbReference type="KEGG" id="sep:SE_0771"/>
<dbReference type="PATRIC" id="fig|176280.10.peg.743"/>
<dbReference type="eggNOG" id="COG0138">
    <property type="taxonomic scope" value="Bacteria"/>
</dbReference>
<dbReference type="HOGENOM" id="CLU_016316_5_2_9"/>
<dbReference type="OrthoDB" id="9802065at2"/>
<dbReference type="UniPathway" id="UPA00074">
    <property type="reaction ID" value="UER00133"/>
</dbReference>
<dbReference type="UniPathway" id="UPA00074">
    <property type="reaction ID" value="UER00135"/>
</dbReference>
<dbReference type="Proteomes" id="UP000001411">
    <property type="component" value="Chromosome"/>
</dbReference>
<dbReference type="GO" id="GO:0005829">
    <property type="term" value="C:cytosol"/>
    <property type="evidence" value="ECO:0007669"/>
    <property type="project" value="TreeGrafter"/>
</dbReference>
<dbReference type="GO" id="GO:0003937">
    <property type="term" value="F:IMP cyclohydrolase activity"/>
    <property type="evidence" value="ECO:0007669"/>
    <property type="project" value="UniProtKB-UniRule"/>
</dbReference>
<dbReference type="GO" id="GO:0004643">
    <property type="term" value="F:phosphoribosylaminoimidazolecarboxamide formyltransferase activity"/>
    <property type="evidence" value="ECO:0007669"/>
    <property type="project" value="UniProtKB-UniRule"/>
</dbReference>
<dbReference type="GO" id="GO:0006189">
    <property type="term" value="P:'de novo' IMP biosynthetic process"/>
    <property type="evidence" value="ECO:0007669"/>
    <property type="project" value="UniProtKB-UniRule"/>
</dbReference>
<dbReference type="CDD" id="cd01421">
    <property type="entry name" value="IMPCH"/>
    <property type="match status" value="1"/>
</dbReference>
<dbReference type="FunFam" id="3.40.140.20:FF:000001">
    <property type="entry name" value="Bifunctional purine biosynthesis protein PurH"/>
    <property type="match status" value="1"/>
</dbReference>
<dbReference type="FunFam" id="3.40.140.20:FF:000002">
    <property type="entry name" value="Bifunctional purine biosynthesis protein PurH"/>
    <property type="match status" value="1"/>
</dbReference>
<dbReference type="FunFam" id="3.40.50.1380:FF:000001">
    <property type="entry name" value="Bifunctional purine biosynthesis protein PurH"/>
    <property type="match status" value="1"/>
</dbReference>
<dbReference type="Gene3D" id="3.40.140.20">
    <property type="match status" value="2"/>
</dbReference>
<dbReference type="Gene3D" id="3.40.50.1380">
    <property type="entry name" value="Methylglyoxal synthase-like domain"/>
    <property type="match status" value="1"/>
</dbReference>
<dbReference type="HAMAP" id="MF_00139">
    <property type="entry name" value="PurH"/>
    <property type="match status" value="1"/>
</dbReference>
<dbReference type="InterPro" id="IPR024051">
    <property type="entry name" value="AICAR_Tfase_dup_dom_sf"/>
</dbReference>
<dbReference type="InterPro" id="IPR016193">
    <property type="entry name" value="Cytidine_deaminase-like"/>
</dbReference>
<dbReference type="InterPro" id="IPR011607">
    <property type="entry name" value="MGS-like_dom"/>
</dbReference>
<dbReference type="InterPro" id="IPR036914">
    <property type="entry name" value="MGS-like_dom_sf"/>
</dbReference>
<dbReference type="InterPro" id="IPR002695">
    <property type="entry name" value="PurH-like"/>
</dbReference>
<dbReference type="NCBIfam" id="NF002049">
    <property type="entry name" value="PRK00881.1"/>
    <property type="match status" value="1"/>
</dbReference>
<dbReference type="NCBIfam" id="TIGR00355">
    <property type="entry name" value="purH"/>
    <property type="match status" value="1"/>
</dbReference>
<dbReference type="PANTHER" id="PTHR11692:SF0">
    <property type="entry name" value="BIFUNCTIONAL PURINE BIOSYNTHESIS PROTEIN ATIC"/>
    <property type="match status" value="1"/>
</dbReference>
<dbReference type="PANTHER" id="PTHR11692">
    <property type="entry name" value="BIFUNCTIONAL PURINE BIOSYNTHESIS PROTEIN PURH"/>
    <property type="match status" value="1"/>
</dbReference>
<dbReference type="Pfam" id="PF01808">
    <property type="entry name" value="AICARFT_IMPCHas"/>
    <property type="match status" value="1"/>
</dbReference>
<dbReference type="Pfam" id="PF02142">
    <property type="entry name" value="MGS"/>
    <property type="match status" value="1"/>
</dbReference>
<dbReference type="PIRSF" id="PIRSF000414">
    <property type="entry name" value="AICARFT_IMPCHas"/>
    <property type="match status" value="1"/>
</dbReference>
<dbReference type="SMART" id="SM00798">
    <property type="entry name" value="AICARFT_IMPCHas"/>
    <property type="match status" value="1"/>
</dbReference>
<dbReference type="SMART" id="SM00851">
    <property type="entry name" value="MGS"/>
    <property type="match status" value="1"/>
</dbReference>
<dbReference type="SUPFAM" id="SSF53927">
    <property type="entry name" value="Cytidine deaminase-like"/>
    <property type="match status" value="1"/>
</dbReference>
<dbReference type="SUPFAM" id="SSF52335">
    <property type="entry name" value="Methylglyoxal synthase-like"/>
    <property type="match status" value="1"/>
</dbReference>
<dbReference type="PROSITE" id="PS51855">
    <property type="entry name" value="MGS"/>
    <property type="match status" value="1"/>
</dbReference>
<accession>Q8CT27</accession>
<comment type="catalytic activity">
    <reaction evidence="1">
        <text>(6R)-10-formyltetrahydrofolate + 5-amino-1-(5-phospho-beta-D-ribosyl)imidazole-4-carboxamide = 5-formamido-1-(5-phospho-D-ribosyl)imidazole-4-carboxamide + (6S)-5,6,7,8-tetrahydrofolate</text>
        <dbReference type="Rhea" id="RHEA:22192"/>
        <dbReference type="ChEBI" id="CHEBI:57453"/>
        <dbReference type="ChEBI" id="CHEBI:58467"/>
        <dbReference type="ChEBI" id="CHEBI:58475"/>
        <dbReference type="ChEBI" id="CHEBI:195366"/>
        <dbReference type="EC" id="2.1.2.3"/>
    </reaction>
</comment>
<comment type="catalytic activity">
    <reaction evidence="1">
        <text>IMP + H2O = 5-formamido-1-(5-phospho-D-ribosyl)imidazole-4-carboxamide</text>
        <dbReference type="Rhea" id="RHEA:18445"/>
        <dbReference type="ChEBI" id="CHEBI:15377"/>
        <dbReference type="ChEBI" id="CHEBI:58053"/>
        <dbReference type="ChEBI" id="CHEBI:58467"/>
        <dbReference type="EC" id="3.5.4.10"/>
    </reaction>
</comment>
<comment type="pathway">
    <text evidence="1">Purine metabolism; IMP biosynthesis via de novo pathway; 5-formamido-1-(5-phospho-D-ribosyl)imidazole-4-carboxamide from 5-amino-1-(5-phospho-D-ribosyl)imidazole-4-carboxamide (10-formyl THF route): step 1/1.</text>
</comment>
<comment type="pathway">
    <text evidence="1">Purine metabolism; IMP biosynthesis via de novo pathway; IMP from 5-formamido-1-(5-phospho-D-ribosyl)imidazole-4-carboxamide: step 1/1.</text>
</comment>
<comment type="domain">
    <text evidence="1">The IMP cyclohydrolase activity resides in the N-terminal region.</text>
</comment>
<comment type="similarity">
    <text evidence="1">Belongs to the PurH family.</text>
</comment>
<keyword id="KW-0378">Hydrolase</keyword>
<keyword id="KW-0511">Multifunctional enzyme</keyword>
<keyword id="KW-0658">Purine biosynthesis</keyword>
<keyword id="KW-0808">Transferase</keyword>